<dbReference type="EC" id="2.7.1.50"/>
<dbReference type="EMBL" id="CM000784">
    <property type="protein sequence ID" value="AFW80762.1"/>
    <property type="molecule type" value="Genomic_DNA"/>
</dbReference>
<dbReference type="RefSeq" id="XP_008655910.1">
    <property type="nucleotide sequence ID" value="XM_008657688.1"/>
</dbReference>
<dbReference type="SMR" id="K7VCB9"/>
<dbReference type="STRING" id="4577.K7VCB9"/>
<dbReference type="PaxDb" id="4577-GRMZM2G094558_P01"/>
<dbReference type="EnsemblPlants" id="Zm00001eb341310_T001">
    <property type="protein sequence ID" value="Zm00001eb341310_P001"/>
    <property type="gene ID" value="Zm00001eb341310"/>
</dbReference>
<dbReference type="Gramene" id="Zm00001eb341310_T001">
    <property type="protein sequence ID" value="Zm00001eb341310_P001"/>
    <property type="gene ID" value="Zm00001eb341310"/>
</dbReference>
<dbReference type="KEGG" id="zma:103635163"/>
<dbReference type="MaizeGDB" id="9023993"/>
<dbReference type="eggNOG" id="ENOG502QS2M">
    <property type="taxonomic scope" value="Eukaryota"/>
</dbReference>
<dbReference type="HOGENOM" id="CLU_019943_0_1_1"/>
<dbReference type="InParanoid" id="K7VCB9"/>
<dbReference type="OMA" id="KRPLVHN"/>
<dbReference type="OrthoDB" id="4994at2759"/>
<dbReference type="BRENDA" id="2.7.1.50">
    <property type="organism ID" value="6752"/>
</dbReference>
<dbReference type="UniPathway" id="UPA00060">
    <property type="reaction ID" value="UER00139"/>
</dbReference>
<dbReference type="Proteomes" id="UP000007305">
    <property type="component" value="Chromosome 8"/>
</dbReference>
<dbReference type="ExpressionAtlas" id="K7VCB9">
    <property type="expression patterns" value="baseline and differential"/>
</dbReference>
<dbReference type="GO" id="GO:0005524">
    <property type="term" value="F:ATP binding"/>
    <property type="evidence" value="ECO:0007669"/>
    <property type="project" value="UniProtKB-KW"/>
</dbReference>
<dbReference type="GO" id="GO:0004417">
    <property type="term" value="F:hydroxyethylthiazole kinase activity"/>
    <property type="evidence" value="ECO:0000314"/>
    <property type="project" value="UniProtKB"/>
</dbReference>
<dbReference type="GO" id="GO:0000287">
    <property type="term" value="F:magnesium ion binding"/>
    <property type="evidence" value="ECO:0007669"/>
    <property type="project" value="InterPro"/>
</dbReference>
<dbReference type="GO" id="GO:0009228">
    <property type="term" value="P:thiamine biosynthetic process"/>
    <property type="evidence" value="ECO:0000314"/>
    <property type="project" value="UniProtKB"/>
</dbReference>
<dbReference type="GO" id="GO:0009229">
    <property type="term" value="P:thiamine diphosphate biosynthetic process"/>
    <property type="evidence" value="ECO:0007669"/>
    <property type="project" value="UniProtKB-UniPathway"/>
</dbReference>
<dbReference type="GO" id="GO:0036172">
    <property type="term" value="P:thiamine salvage"/>
    <property type="evidence" value="ECO:0000314"/>
    <property type="project" value="UniProtKB"/>
</dbReference>
<dbReference type="CDD" id="cd01170">
    <property type="entry name" value="THZ_kinase"/>
    <property type="match status" value="1"/>
</dbReference>
<dbReference type="FunFam" id="3.40.1190.20:FF:000015">
    <property type="entry name" value="Hydroxyethylthiazole kinase"/>
    <property type="match status" value="1"/>
</dbReference>
<dbReference type="Gene3D" id="3.40.1190.20">
    <property type="match status" value="1"/>
</dbReference>
<dbReference type="HAMAP" id="MF_00228">
    <property type="entry name" value="Thz_kinase"/>
    <property type="match status" value="1"/>
</dbReference>
<dbReference type="InterPro" id="IPR000417">
    <property type="entry name" value="Hyethyz_kinase"/>
</dbReference>
<dbReference type="InterPro" id="IPR029056">
    <property type="entry name" value="Ribokinase-like"/>
</dbReference>
<dbReference type="NCBIfam" id="NF006830">
    <property type="entry name" value="PRK09355.1"/>
    <property type="match status" value="1"/>
</dbReference>
<dbReference type="Pfam" id="PF02110">
    <property type="entry name" value="HK"/>
    <property type="match status" value="1"/>
</dbReference>
<dbReference type="PIRSF" id="PIRSF000513">
    <property type="entry name" value="Thz_kinase"/>
    <property type="match status" value="1"/>
</dbReference>
<dbReference type="PRINTS" id="PR01099">
    <property type="entry name" value="HYETHTZKNASE"/>
</dbReference>
<dbReference type="SUPFAM" id="SSF53613">
    <property type="entry name" value="Ribokinase-like"/>
    <property type="match status" value="1"/>
</dbReference>
<proteinExistence type="evidence at protein level"/>
<organism>
    <name type="scientific">Zea mays</name>
    <name type="common">Maize</name>
    <dbReference type="NCBI Taxonomy" id="4577"/>
    <lineage>
        <taxon>Eukaryota</taxon>
        <taxon>Viridiplantae</taxon>
        <taxon>Streptophyta</taxon>
        <taxon>Embryophyta</taxon>
        <taxon>Tracheophyta</taxon>
        <taxon>Spermatophyta</taxon>
        <taxon>Magnoliopsida</taxon>
        <taxon>Liliopsida</taxon>
        <taxon>Poales</taxon>
        <taxon>Poaceae</taxon>
        <taxon>PACMAD clade</taxon>
        <taxon>Panicoideae</taxon>
        <taxon>Andropogonodae</taxon>
        <taxon>Andropogoneae</taxon>
        <taxon>Tripsacinae</taxon>
        <taxon>Zea</taxon>
    </lineage>
</organism>
<sequence>MDVGAKEEEMGQVWWGHRAWSLLSAVRARAPLVQCITNLVSMDIAANVLLAAGASPAMVHSLREVPDFTPRCDAVYVNVGTLSEDWLPSMRAAASAGRPWVLDPVAAAASGFRMKACLELLSLCPAVVRGNASEILALASRSTAASSNFKGVDSSHCSVDAIEAAKALALSSSAVVAVSGAVDFVTDGKQVISVSNGVPMMQKITATGCAVTALIAAFVAMEPSDAIVAAACALAIFGLVGEIGMESAKGPASLRMHLIDALYCLNEETVTSRVRISLRP</sequence>
<feature type="chain" id="PRO_0000424280" description="Hydroxyethylthiazole kinase">
    <location>
        <begin position="1"/>
        <end position="280"/>
    </location>
</feature>
<feature type="binding site" evidence="1">
    <location>
        <position position="58"/>
    </location>
    <ligand>
        <name>substrate</name>
    </ligand>
</feature>
<feature type="binding site" evidence="1">
    <location>
        <position position="129"/>
    </location>
    <ligand>
        <name>ATP</name>
        <dbReference type="ChEBI" id="CHEBI:30616"/>
    </ligand>
</feature>
<feature type="binding site" evidence="1">
    <location>
        <position position="206"/>
    </location>
    <ligand>
        <name>substrate</name>
    </ligand>
</feature>
<keyword id="KW-0067">ATP-binding</keyword>
<keyword id="KW-0418">Kinase</keyword>
<keyword id="KW-0460">Magnesium</keyword>
<keyword id="KW-0479">Metal-binding</keyword>
<keyword id="KW-0547">Nucleotide-binding</keyword>
<keyword id="KW-0614">Plasmid</keyword>
<keyword id="KW-1185">Reference proteome</keyword>
<keyword id="KW-0784">Thiamine biosynthesis</keyword>
<keyword id="KW-0808">Transferase</keyword>
<gene>
    <name type="primary">THIM</name>
    <name type="ORF">ZEAMMB73_814699</name>
</gene>
<comment type="function">
    <text evidence="2">Thiazole kinase involved in thiamine salvage pathway.</text>
</comment>
<comment type="catalytic activity">
    <reaction evidence="2">
        <text>5-(2-hydroxyethyl)-4-methylthiazole + ATP = 4-methyl-5-(2-phosphooxyethyl)-thiazole + ADP + H(+)</text>
        <dbReference type="Rhea" id="RHEA:24212"/>
        <dbReference type="ChEBI" id="CHEBI:15378"/>
        <dbReference type="ChEBI" id="CHEBI:17957"/>
        <dbReference type="ChEBI" id="CHEBI:30616"/>
        <dbReference type="ChEBI" id="CHEBI:58296"/>
        <dbReference type="ChEBI" id="CHEBI:456216"/>
        <dbReference type="EC" id="2.7.1.50"/>
    </reaction>
</comment>
<comment type="cofactor">
    <cofactor evidence="1">
        <name>Mg(2+)</name>
        <dbReference type="ChEBI" id="CHEBI:18420"/>
    </cofactor>
</comment>
<comment type="biophysicochemical properties">
    <kinetics>
        <KM evidence="2">21.8 uM for thiazole</KM>
        <KM evidence="2">17.5 uM for ATP</KM>
        <text>kcat is 1.79 sec(-1) for thiazole. kcat is 2.39 sec(-1) for ATP.</text>
    </kinetics>
</comment>
<comment type="pathway">
    <text>Cofactor biosynthesis; thiamine diphosphate biosynthesis; 4-methyl-5-(2-phosphoethyl)-thiazole from 5-(2-hydroxyethyl)-4-methylthiazole: step 1/1.</text>
</comment>
<comment type="similarity">
    <text evidence="3">Belongs to the Thz kinase family.</text>
</comment>
<accession>K7VCB9</accession>
<name>THIM_MAIZE</name>
<protein>
    <recommendedName>
        <fullName>Hydroxyethylthiazole kinase</fullName>
        <ecNumber>2.7.1.50</ecNumber>
    </recommendedName>
    <alternativeName>
        <fullName>4-methyl-5-beta-hydroxyethylthiazole kinase</fullName>
        <shortName>TH kinase</shortName>
        <shortName>Thz kinase</shortName>
    </alternativeName>
</protein>
<evidence type="ECO:0000250" key="1"/>
<evidence type="ECO:0000269" key="2">
    <source>
    </source>
</evidence>
<evidence type="ECO:0000305" key="3"/>
<reference key="1">
    <citation type="journal article" date="2009" name="Science">
        <title>The B73 maize genome: complexity, diversity, and dynamics.</title>
        <authorList>
            <person name="Schnable P.S."/>
            <person name="Ware D."/>
            <person name="Fulton R.S."/>
            <person name="Stein J.C."/>
            <person name="Wei F."/>
            <person name="Pasternak S."/>
            <person name="Liang C."/>
            <person name="Zhang J."/>
            <person name="Fulton L."/>
            <person name="Graves T.A."/>
            <person name="Minx P."/>
            <person name="Reily A.D."/>
            <person name="Courtney L."/>
            <person name="Kruchowski S.S."/>
            <person name="Tomlinson C."/>
            <person name="Strong C."/>
            <person name="Delehaunty K."/>
            <person name="Fronick C."/>
            <person name="Courtney B."/>
            <person name="Rock S.M."/>
            <person name="Belter E."/>
            <person name="Du F."/>
            <person name="Kim K."/>
            <person name="Abbott R.M."/>
            <person name="Cotton M."/>
            <person name="Levy A."/>
            <person name="Marchetto P."/>
            <person name="Ochoa K."/>
            <person name="Jackson S.M."/>
            <person name="Gillam B."/>
            <person name="Chen W."/>
            <person name="Yan L."/>
            <person name="Higginbotham J."/>
            <person name="Cardenas M."/>
            <person name="Waligorski J."/>
            <person name="Applebaum E."/>
            <person name="Phelps L."/>
            <person name="Falcone J."/>
            <person name="Kanchi K."/>
            <person name="Thane T."/>
            <person name="Scimone A."/>
            <person name="Thane N."/>
            <person name="Henke J."/>
            <person name="Wang T."/>
            <person name="Ruppert J."/>
            <person name="Shah N."/>
            <person name="Rotter K."/>
            <person name="Hodges J."/>
            <person name="Ingenthron E."/>
            <person name="Cordes M."/>
            <person name="Kohlberg S."/>
            <person name="Sgro J."/>
            <person name="Delgado B."/>
            <person name="Mead K."/>
            <person name="Chinwalla A."/>
            <person name="Leonard S."/>
            <person name="Crouse K."/>
            <person name="Collura K."/>
            <person name="Kudrna D."/>
            <person name="Currie J."/>
            <person name="He R."/>
            <person name="Angelova A."/>
            <person name="Rajasekar S."/>
            <person name="Mueller T."/>
            <person name="Lomeli R."/>
            <person name="Scara G."/>
            <person name="Ko A."/>
            <person name="Delaney K."/>
            <person name="Wissotski M."/>
            <person name="Lopez G."/>
            <person name="Campos D."/>
            <person name="Braidotti M."/>
            <person name="Ashley E."/>
            <person name="Golser W."/>
            <person name="Kim H."/>
            <person name="Lee S."/>
            <person name="Lin J."/>
            <person name="Dujmic Z."/>
            <person name="Kim W."/>
            <person name="Talag J."/>
            <person name="Zuccolo A."/>
            <person name="Fan C."/>
            <person name="Sebastian A."/>
            <person name="Kramer M."/>
            <person name="Spiegel L."/>
            <person name="Nascimento L."/>
            <person name="Zutavern T."/>
            <person name="Miller B."/>
            <person name="Ambroise C."/>
            <person name="Muller S."/>
            <person name="Spooner W."/>
            <person name="Narechania A."/>
            <person name="Ren L."/>
            <person name="Wei S."/>
            <person name="Kumari S."/>
            <person name="Faga B."/>
            <person name="Levy M.J."/>
            <person name="McMahan L."/>
            <person name="Van Buren P."/>
            <person name="Vaughn M.W."/>
            <person name="Ying K."/>
            <person name="Yeh C.-T."/>
            <person name="Emrich S.J."/>
            <person name="Jia Y."/>
            <person name="Kalyanaraman A."/>
            <person name="Hsia A.-P."/>
            <person name="Barbazuk W.B."/>
            <person name="Baucom R.S."/>
            <person name="Brutnell T.P."/>
            <person name="Carpita N.C."/>
            <person name="Chaparro C."/>
            <person name="Chia J.-M."/>
            <person name="Deragon J.-M."/>
            <person name="Estill J.C."/>
            <person name="Fu Y."/>
            <person name="Jeddeloh J.A."/>
            <person name="Han Y."/>
            <person name="Lee H."/>
            <person name="Li P."/>
            <person name="Lisch D.R."/>
            <person name="Liu S."/>
            <person name="Liu Z."/>
            <person name="Nagel D.H."/>
            <person name="McCann M.C."/>
            <person name="SanMiguel P."/>
            <person name="Myers A.M."/>
            <person name="Nettleton D."/>
            <person name="Nguyen J."/>
            <person name="Penning B.W."/>
            <person name="Ponnala L."/>
            <person name="Schneider K.L."/>
            <person name="Schwartz D.C."/>
            <person name="Sharma A."/>
            <person name="Soderlund C."/>
            <person name="Springer N.M."/>
            <person name="Sun Q."/>
            <person name="Wang H."/>
            <person name="Waterman M."/>
            <person name="Westerman R."/>
            <person name="Wolfgruber T.K."/>
            <person name="Yang L."/>
            <person name="Yu Y."/>
            <person name="Zhang L."/>
            <person name="Zhou S."/>
            <person name="Zhu Q."/>
            <person name="Bennetzen J.L."/>
            <person name="Dawe R.K."/>
            <person name="Jiang J."/>
            <person name="Jiang N."/>
            <person name="Presting G.G."/>
            <person name="Wessler S.R."/>
            <person name="Aluru S."/>
            <person name="Martienssen R.A."/>
            <person name="Clifton S.W."/>
            <person name="McCombie W.R."/>
            <person name="Wing R.A."/>
            <person name="Wilson R.K."/>
        </authorList>
    </citation>
    <scope>NUCLEOTIDE SEQUENCE [LARGE SCALE GENOMIC DNA]</scope>
    <source>
        <strain>cv. B73</strain>
    </source>
</reference>
<reference key="2">
    <citation type="submission" date="2012-08" db="EMBL/GenBank/DDBJ databases">
        <authorList>
            <consortium name="Maize Genome Sequencing Project"/>
        </authorList>
    </citation>
    <scope>NUCLEOTIDE SEQUENCE [LARGE SCALE GENOMIC DNA]</scope>
</reference>
<reference key="3">
    <citation type="journal article" date="2013" name="Phytochemistry">
        <title>Identification of the thiamin salvage enzyme thiazole kinase in Arabidopsis and maize.</title>
        <authorList>
            <person name="Yazdani M."/>
            <person name="Zallot R."/>
            <person name="Tunc-Ozdemir M."/>
            <person name="de Crecy-Lagard V."/>
            <person name="Shintani D.K."/>
            <person name="Hanson A.D."/>
        </authorList>
    </citation>
    <scope>FUNCTION</scope>
    <scope>CATALYTIC ACTIVITY</scope>
    <scope>BIOPHYSICOCHEMICAL PROPERTIES</scope>
</reference>